<keyword id="KW-1003">Cell membrane</keyword>
<keyword id="KW-0472">Membrane</keyword>
<keyword id="KW-1185">Reference proteome</keyword>
<keyword id="KW-0812">Transmembrane</keyword>
<keyword id="KW-1133">Transmembrane helix</keyword>
<sequence>MDKSKVSTAVGGETPVGLITGSRDDELESGSMRTAETVLRLVPMAFCISALVLMLKNSQTNDFGTLSYSDLGAFRYLVHANGICAGYSLLSAIIVAMPRPSTMSRAWTFFFLDQVLTYVILAAAAVSVEALYLARKGDIAITWSAACVSFGGFCHKAITSAVITFIVVVCYALLSLVSSYKLFSRYGAPDVSYPGKGIEVAAFHS</sequence>
<reference key="1">
    <citation type="journal article" date="2010" name="Nat. Biotechnol.">
        <title>Draft genome sequence of the oilseed species Ricinus communis.</title>
        <authorList>
            <person name="Chan A.P."/>
            <person name="Crabtree J."/>
            <person name="Zhao Q."/>
            <person name="Lorenzi H."/>
            <person name="Orvis J."/>
            <person name="Puiu D."/>
            <person name="Melake-Berhan A."/>
            <person name="Jones K.M."/>
            <person name="Redman J."/>
            <person name="Chen G."/>
            <person name="Cahoon E.B."/>
            <person name="Gedil M."/>
            <person name="Stanke M."/>
            <person name="Haas B.J."/>
            <person name="Wortman J.R."/>
            <person name="Fraser-Liggett C.M."/>
            <person name="Ravel J."/>
            <person name="Rabinowicz P.D."/>
        </authorList>
    </citation>
    <scope>NUCLEOTIDE SEQUENCE [LARGE SCALE GENOMIC DNA]</scope>
    <source>
        <strain>cv. Hale</strain>
    </source>
</reference>
<reference key="2">
    <citation type="journal article" date="2014" name="Plant Physiol.">
        <title>Functional and evolutionary analysis of the CASPARIAN STRIP MEMBRANE DOMAIN PROTEIN family.</title>
        <authorList>
            <person name="Roppolo D."/>
            <person name="Boeckmann B."/>
            <person name="Pfister A."/>
            <person name="Boutet E."/>
            <person name="Rubio M.C."/>
            <person name="Denervaud-Tendon V."/>
            <person name="Vermeer J.E."/>
            <person name="Gheyselinck J."/>
            <person name="Xenarios I."/>
            <person name="Geldner N."/>
        </authorList>
    </citation>
    <scope>GENE FAMILY</scope>
    <scope>NOMENCLATURE</scope>
</reference>
<name>CSPLD_RICCO</name>
<protein>
    <recommendedName>
        <fullName>CASP-like protein 2A1</fullName>
        <shortName>RcCASPL2A1</shortName>
    </recommendedName>
</protein>
<accession>B9T3K6</accession>
<dbReference type="EMBL" id="EQ974425">
    <property type="protein sequence ID" value="EEF29555.1"/>
    <property type="molecule type" value="Genomic_DNA"/>
</dbReference>
<dbReference type="RefSeq" id="XP_002532825.1">
    <property type="nucleotide sequence ID" value="XM_002532779.2"/>
</dbReference>
<dbReference type="FunCoup" id="B9T3K6">
    <property type="interactions" value="671"/>
</dbReference>
<dbReference type="STRING" id="3988.B9T3K6"/>
<dbReference type="KEGG" id="rcu:8278048"/>
<dbReference type="eggNOG" id="ENOG502S0J7">
    <property type="taxonomic scope" value="Eukaryota"/>
</dbReference>
<dbReference type="InParanoid" id="B9T3K6"/>
<dbReference type="OrthoDB" id="749363at2759"/>
<dbReference type="Proteomes" id="UP000008311">
    <property type="component" value="Unassembled WGS sequence"/>
</dbReference>
<dbReference type="GO" id="GO:0005886">
    <property type="term" value="C:plasma membrane"/>
    <property type="evidence" value="ECO:0007669"/>
    <property type="project" value="UniProtKB-SubCell"/>
</dbReference>
<dbReference type="InterPro" id="IPR006459">
    <property type="entry name" value="CASP/CASPL"/>
</dbReference>
<dbReference type="InterPro" id="IPR006702">
    <property type="entry name" value="CASP_dom"/>
</dbReference>
<dbReference type="NCBIfam" id="TIGR01569">
    <property type="entry name" value="A_tha_TIGR01569"/>
    <property type="match status" value="1"/>
</dbReference>
<dbReference type="PANTHER" id="PTHR33573:SF46">
    <property type="entry name" value="CASP-LIKE PROTEIN 2A1"/>
    <property type="match status" value="1"/>
</dbReference>
<dbReference type="PANTHER" id="PTHR33573">
    <property type="entry name" value="CASP-LIKE PROTEIN 4A4"/>
    <property type="match status" value="1"/>
</dbReference>
<dbReference type="Pfam" id="PF04535">
    <property type="entry name" value="CASP_dom"/>
    <property type="match status" value="1"/>
</dbReference>
<evidence type="ECO:0000250" key="1"/>
<evidence type="ECO:0000255" key="2"/>
<evidence type="ECO:0000256" key="3">
    <source>
        <dbReference type="SAM" id="MobiDB-lite"/>
    </source>
</evidence>
<evidence type="ECO:0000305" key="4"/>
<feature type="chain" id="PRO_0000391578" description="CASP-like protein 2A1">
    <location>
        <begin position="1"/>
        <end position="205"/>
    </location>
</feature>
<feature type="topological domain" description="Cytoplasmic" evidence="2">
    <location>
        <begin position="1"/>
        <end position="34"/>
    </location>
</feature>
<feature type="transmembrane region" description="Helical" evidence="2">
    <location>
        <begin position="35"/>
        <end position="55"/>
    </location>
</feature>
<feature type="topological domain" description="Extracellular" evidence="2">
    <location>
        <begin position="56"/>
        <end position="76"/>
    </location>
</feature>
<feature type="transmembrane region" description="Helical" evidence="2">
    <location>
        <begin position="77"/>
        <end position="97"/>
    </location>
</feature>
<feature type="topological domain" description="Cytoplasmic" evidence="2">
    <location>
        <begin position="98"/>
        <end position="105"/>
    </location>
</feature>
<feature type="transmembrane region" description="Helical" evidence="2">
    <location>
        <begin position="106"/>
        <end position="126"/>
    </location>
</feature>
<feature type="topological domain" description="Extracellular" evidence="2">
    <location>
        <begin position="127"/>
        <end position="156"/>
    </location>
</feature>
<feature type="transmembrane region" description="Helical" evidence="2">
    <location>
        <begin position="157"/>
        <end position="177"/>
    </location>
</feature>
<feature type="topological domain" description="Cytoplasmic" evidence="2">
    <location>
        <begin position="178"/>
        <end position="205"/>
    </location>
</feature>
<feature type="region of interest" description="Disordered" evidence="3">
    <location>
        <begin position="1"/>
        <end position="25"/>
    </location>
</feature>
<organism>
    <name type="scientific">Ricinus communis</name>
    <name type="common">Castor bean</name>
    <dbReference type="NCBI Taxonomy" id="3988"/>
    <lineage>
        <taxon>Eukaryota</taxon>
        <taxon>Viridiplantae</taxon>
        <taxon>Streptophyta</taxon>
        <taxon>Embryophyta</taxon>
        <taxon>Tracheophyta</taxon>
        <taxon>Spermatophyta</taxon>
        <taxon>Magnoliopsida</taxon>
        <taxon>eudicotyledons</taxon>
        <taxon>Gunneridae</taxon>
        <taxon>Pentapetalae</taxon>
        <taxon>rosids</taxon>
        <taxon>fabids</taxon>
        <taxon>Malpighiales</taxon>
        <taxon>Euphorbiaceae</taxon>
        <taxon>Acalyphoideae</taxon>
        <taxon>Acalypheae</taxon>
        <taxon>Ricinus</taxon>
    </lineage>
</organism>
<gene>
    <name type="ORF">RCOM_0477780</name>
</gene>
<comment type="subunit">
    <text evidence="1">Homodimer and heterodimers.</text>
</comment>
<comment type="subcellular location">
    <subcellularLocation>
        <location evidence="1">Cell membrane</location>
        <topology evidence="1">Multi-pass membrane protein</topology>
    </subcellularLocation>
</comment>
<comment type="similarity">
    <text evidence="4">Belongs to the Casparian strip membrane proteins (CASP) family.</text>
</comment>
<proteinExistence type="evidence at transcript level"/>